<evidence type="ECO:0000255" key="1">
    <source>
        <dbReference type="HAMAP-Rule" id="MF_01350"/>
    </source>
</evidence>
<proteinExistence type="inferred from homology"/>
<sequence length="331" mass="36296">MLNWTAGFLVLIAKLTIVLAVLLLVAAYLVWLERKFLARLQIRYGPNRAGKFGLLQPIADIVKMVAKEDTVPEGAERTIFMLAPAVVAATALLVFAVIPFGKDVTLWGMKIPLVVADLNVGLLYFFALSSLGVYGVALGGWASNSKYSLLGGIRGAAQMISYELSLGLAIVPVVMQARSFSLVDIVQAQEKYPFILTQPVAFAIFVISAMAEIKRIPFDLPEAENELGAGFHTEYSGMRFGLFFLGEYVNMQVLGGLVAVLFLGGWHGPLLPPVVWLFIKIVLVALIMIWVRGTLPRLRYDQLMALGWKVLIPLALVNIMVTGAWVLWMGK</sequence>
<gene>
    <name evidence="1" type="primary">nuoH2</name>
    <name type="ordered locus">Sfum_1941</name>
</gene>
<feature type="chain" id="PRO_0000299955" description="NADH-quinone oxidoreductase subunit H 2">
    <location>
        <begin position="1"/>
        <end position="331"/>
    </location>
</feature>
<feature type="transmembrane region" description="Helical" evidence="1">
    <location>
        <begin position="6"/>
        <end position="26"/>
    </location>
</feature>
<feature type="transmembrane region" description="Helical" evidence="1">
    <location>
        <begin position="79"/>
        <end position="99"/>
    </location>
</feature>
<feature type="transmembrane region" description="Helical" evidence="1">
    <location>
        <begin position="120"/>
        <end position="140"/>
    </location>
</feature>
<feature type="transmembrane region" description="Helical" evidence="1">
    <location>
        <begin position="155"/>
        <end position="175"/>
    </location>
</feature>
<feature type="transmembrane region" description="Helical" evidence="1">
    <location>
        <begin position="193"/>
        <end position="213"/>
    </location>
</feature>
<feature type="transmembrane region" description="Helical" evidence="1">
    <location>
        <begin position="242"/>
        <end position="262"/>
    </location>
</feature>
<feature type="transmembrane region" description="Helical" evidence="1">
    <location>
        <begin position="271"/>
        <end position="291"/>
    </location>
</feature>
<feature type="transmembrane region" description="Helical" evidence="1">
    <location>
        <begin position="310"/>
        <end position="330"/>
    </location>
</feature>
<comment type="function">
    <text evidence="1">NDH-1 shuttles electrons from NADH, via FMN and iron-sulfur (Fe-S) centers, to quinones in the respiratory chain. The immediate electron acceptor for the enzyme in this species is believed to be ubiquinone. Couples the redox reaction to proton translocation (for every two electrons transferred, four hydrogen ions are translocated across the cytoplasmic membrane), and thus conserves the redox energy in a proton gradient. This subunit may bind ubiquinone.</text>
</comment>
<comment type="catalytic activity">
    <reaction evidence="1">
        <text>a quinone + NADH + 5 H(+)(in) = a quinol + NAD(+) + 4 H(+)(out)</text>
        <dbReference type="Rhea" id="RHEA:57888"/>
        <dbReference type="ChEBI" id="CHEBI:15378"/>
        <dbReference type="ChEBI" id="CHEBI:24646"/>
        <dbReference type="ChEBI" id="CHEBI:57540"/>
        <dbReference type="ChEBI" id="CHEBI:57945"/>
        <dbReference type="ChEBI" id="CHEBI:132124"/>
    </reaction>
</comment>
<comment type="subunit">
    <text evidence="1">NDH-1 is composed of 14 different subunits. Subunits NuoA, H, J, K, L, M, N constitute the membrane sector of the complex.</text>
</comment>
<comment type="subcellular location">
    <subcellularLocation>
        <location evidence="1">Cell inner membrane</location>
        <topology evidence="1">Multi-pass membrane protein</topology>
    </subcellularLocation>
</comment>
<comment type="similarity">
    <text evidence="1">Belongs to the complex I subunit 1 family.</text>
</comment>
<dbReference type="EC" id="7.1.1.-" evidence="1"/>
<dbReference type="EMBL" id="CP000478">
    <property type="protein sequence ID" value="ABK17626.1"/>
    <property type="molecule type" value="Genomic_DNA"/>
</dbReference>
<dbReference type="RefSeq" id="WP_011698796.1">
    <property type="nucleotide sequence ID" value="NC_008554.1"/>
</dbReference>
<dbReference type="SMR" id="A0LJM4"/>
<dbReference type="FunCoup" id="A0LJM4">
    <property type="interactions" value="189"/>
</dbReference>
<dbReference type="STRING" id="335543.Sfum_1941"/>
<dbReference type="KEGG" id="sfu:Sfum_1941"/>
<dbReference type="eggNOG" id="COG1005">
    <property type="taxonomic scope" value="Bacteria"/>
</dbReference>
<dbReference type="HOGENOM" id="CLU_015134_0_1_7"/>
<dbReference type="InParanoid" id="A0LJM4"/>
<dbReference type="OrthoDB" id="9803734at2"/>
<dbReference type="Proteomes" id="UP000001784">
    <property type="component" value="Chromosome"/>
</dbReference>
<dbReference type="GO" id="GO:0005886">
    <property type="term" value="C:plasma membrane"/>
    <property type="evidence" value="ECO:0007669"/>
    <property type="project" value="UniProtKB-SubCell"/>
</dbReference>
<dbReference type="GO" id="GO:0003954">
    <property type="term" value="F:NADH dehydrogenase activity"/>
    <property type="evidence" value="ECO:0007669"/>
    <property type="project" value="TreeGrafter"/>
</dbReference>
<dbReference type="GO" id="GO:0016655">
    <property type="term" value="F:oxidoreductase activity, acting on NAD(P)H, quinone or similar compound as acceptor"/>
    <property type="evidence" value="ECO:0007669"/>
    <property type="project" value="UniProtKB-UniRule"/>
</dbReference>
<dbReference type="GO" id="GO:0048038">
    <property type="term" value="F:quinone binding"/>
    <property type="evidence" value="ECO:0007669"/>
    <property type="project" value="UniProtKB-KW"/>
</dbReference>
<dbReference type="GO" id="GO:0009060">
    <property type="term" value="P:aerobic respiration"/>
    <property type="evidence" value="ECO:0007669"/>
    <property type="project" value="TreeGrafter"/>
</dbReference>
<dbReference type="HAMAP" id="MF_01350">
    <property type="entry name" value="NDH1_NuoH"/>
    <property type="match status" value="1"/>
</dbReference>
<dbReference type="InterPro" id="IPR001694">
    <property type="entry name" value="NADH_UbQ_OxRdtase_su1/FPO"/>
</dbReference>
<dbReference type="InterPro" id="IPR018086">
    <property type="entry name" value="NADH_UbQ_OxRdtase_su1_CS"/>
</dbReference>
<dbReference type="NCBIfam" id="NF004741">
    <property type="entry name" value="PRK06076.1-2"/>
    <property type="match status" value="1"/>
</dbReference>
<dbReference type="PANTHER" id="PTHR11432">
    <property type="entry name" value="NADH DEHYDROGENASE SUBUNIT 1"/>
    <property type="match status" value="1"/>
</dbReference>
<dbReference type="PANTHER" id="PTHR11432:SF3">
    <property type="entry name" value="NADH-UBIQUINONE OXIDOREDUCTASE CHAIN 1"/>
    <property type="match status" value="1"/>
</dbReference>
<dbReference type="Pfam" id="PF00146">
    <property type="entry name" value="NADHdh"/>
    <property type="match status" value="1"/>
</dbReference>
<dbReference type="PROSITE" id="PS00667">
    <property type="entry name" value="COMPLEX1_ND1_1"/>
    <property type="match status" value="1"/>
</dbReference>
<dbReference type="PROSITE" id="PS00668">
    <property type="entry name" value="COMPLEX1_ND1_2"/>
    <property type="match status" value="1"/>
</dbReference>
<reference key="1">
    <citation type="submission" date="2006-10" db="EMBL/GenBank/DDBJ databases">
        <title>Complete sequence of Syntrophobacter fumaroxidans MPOB.</title>
        <authorList>
            <consortium name="US DOE Joint Genome Institute"/>
            <person name="Copeland A."/>
            <person name="Lucas S."/>
            <person name="Lapidus A."/>
            <person name="Barry K."/>
            <person name="Detter J.C."/>
            <person name="Glavina del Rio T."/>
            <person name="Hammon N."/>
            <person name="Israni S."/>
            <person name="Pitluck S."/>
            <person name="Goltsman E.G."/>
            <person name="Martinez M."/>
            <person name="Schmutz J."/>
            <person name="Larimer F."/>
            <person name="Land M."/>
            <person name="Hauser L."/>
            <person name="Kyrpides N."/>
            <person name="Kim E."/>
            <person name="Boone D.R."/>
            <person name="Brockman F."/>
            <person name="Culley D."/>
            <person name="Ferry J."/>
            <person name="Gunsalus R."/>
            <person name="McInerney M.J."/>
            <person name="Morrison M."/>
            <person name="Plugge C."/>
            <person name="Rohlin L."/>
            <person name="Scholten J."/>
            <person name="Sieber J."/>
            <person name="Stams A.J.M."/>
            <person name="Worm P."/>
            <person name="Henstra A.M."/>
            <person name="Richardson P."/>
        </authorList>
    </citation>
    <scope>NUCLEOTIDE SEQUENCE [LARGE SCALE GENOMIC DNA]</scope>
    <source>
        <strain>DSM 10017 / MPOB</strain>
    </source>
</reference>
<accession>A0LJM4</accession>
<organism>
    <name type="scientific">Syntrophobacter fumaroxidans (strain DSM 10017 / MPOB)</name>
    <dbReference type="NCBI Taxonomy" id="335543"/>
    <lineage>
        <taxon>Bacteria</taxon>
        <taxon>Pseudomonadati</taxon>
        <taxon>Thermodesulfobacteriota</taxon>
        <taxon>Syntrophobacteria</taxon>
        <taxon>Syntrophobacterales</taxon>
        <taxon>Syntrophobacteraceae</taxon>
        <taxon>Syntrophobacter</taxon>
    </lineage>
</organism>
<keyword id="KW-0997">Cell inner membrane</keyword>
<keyword id="KW-1003">Cell membrane</keyword>
<keyword id="KW-0472">Membrane</keyword>
<keyword id="KW-0520">NAD</keyword>
<keyword id="KW-0874">Quinone</keyword>
<keyword id="KW-1185">Reference proteome</keyword>
<keyword id="KW-1278">Translocase</keyword>
<keyword id="KW-0812">Transmembrane</keyword>
<keyword id="KW-1133">Transmembrane helix</keyword>
<keyword id="KW-0830">Ubiquinone</keyword>
<name>NUOH2_SYNFM</name>
<protein>
    <recommendedName>
        <fullName evidence="1">NADH-quinone oxidoreductase subunit H 2</fullName>
        <ecNumber evidence="1">7.1.1.-</ecNumber>
    </recommendedName>
    <alternativeName>
        <fullName evidence="1">NADH dehydrogenase I subunit H 2</fullName>
    </alternativeName>
    <alternativeName>
        <fullName evidence="1">NDH-1 subunit H 2</fullName>
    </alternativeName>
</protein>